<comment type="function">
    <text evidence="14 15 16 17 18 19">Inositol 1,4,5-trisphosphate-gated calcium channel that, upon 1D-myo-inositol 1,4,5-trisphosphate binding, transports calcium from the endoplasmic reticulum lumen to cytoplasm, thus releasing the intracellular calcium and therefore participates in cellular calcium ion homeostasis (PubMed:32949214, PubMed:37898605, PubMed:8081734, PubMed:8288584). 1D-myo-inositol 1,4,5-trisphosphate binds to the ligand-free channel without altering its global conformation, yielding the low-energy resting state, then progresses through resting-to preactivated transitions to the higher energy preactivated state, which increases affinity for calcium, promoting binding of the low basal cytosolic calcium at the juxtamembrane domain (JD) site, favoring the transition through the ensemble of high-energy intermediate states along the trajectory to the fully-open activated state (PubMed:30013099, PubMed:35301323, PubMed:37898605). Upon opening, releases calcium in the cytosol where it can bind to the low-affinity cytoplasmic domain (CD) site and stabilizes the inhibited state to terminate calcium release (PubMed:30013099, PubMed:35301323, PubMed:37898605).</text>
</comment>
<comment type="catalytic activity">
    <reaction evidence="17">
        <text>Ca(2+)(in) = Ca(2+)(out)</text>
        <dbReference type="Rhea" id="RHEA:29671"/>
        <dbReference type="ChEBI" id="CHEBI:29108"/>
    </reaction>
</comment>
<comment type="activity regulation">
    <text evidence="14 16 17">Inositol 1,4,5-trisphosphate-gated calcium channel is regulated by cytosolic calcium in a biphasic manner (PubMed:30013099, PubMed:35301323, PubMed:37898605). At low concentrations, cytosolic calcium binds at a high-affinity juxtamembrane domain (JD) calcium binding site, allowing ITPR3 to activate by escaping a low-energy resting state through an ensemble of preactivated states (PubMed:30013099, PubMed:35301323, PubMed:37898605). At high cytosolic calcium concentrations, ITPR3 preferentially enters an inhibited state stabilized by calcium binding at a second, low-affinity cytoplasmic domain (CD) calcium binding site (PubMed:30013099, PubMed:35301323, PubMed:37898605).</text>
</comment>
<comment type="subunit">
    <text evidence="1 2 3 7 8 9 10 12 13 14 16 17">Homotetramer (PubMed:30013099, PubMed:35301323, PubMed:37898605). Homodimer (By similarity). Interacts with TRPC1, TRPC3 and TRPC4. Interacts with TRPV4 (PubMed:18826956). Interacts with SIGMAR1 (By similarity). Interacts with PML and AKT1 (By similarity). Interacts with IRAG2 (via coiled-coil domain) (By similarity). Interacts with CABP1 (PubMed:12032348). Interacts with TMBIM4/LFG4 (PubMed:19553469). Interacts with CEMIP (PubMed:23936024). Interacts with TESPA1 (By similarity). Interacts with TMEM203 (PubMed:25996873). Interacts with BOK; regulates ITPR3 expression (By similarity). Interacts with BCL2L10 (PubMed:27995898). Interacts with CHGA and CHGB (By similarity).</text>
</comment>
<comment type="interaction">
    <interactant intactId="EBI-351055">
        <id>Q14573</id>
    </interactant>
    <interactant intactId="EBI-1791447">
        <id>Q92560</id>
        <label>BAP1</label>
    </interactant>
    <organismsDiffer>false</organismsDiffer>
    <experiments>12</experiments>
</comment>
<comment type="interaction">
    <interactant intactId="EBI-351055">
        <id>Q14573</id>
    </interactant>
    <interactant intactId="EBI-520807">
        <id>Q13507</id>
        <label>TRPC3</label>
    </interactant>
    <organismsDiffer>false</organismsDiffer>
    <experiments>5</experiments>
</comment>
<comment type="subcellular location">
    <subcellularLocation>
        <location evidence="2">Endoplasmic reticulum membrane</location>
        <topology evidence="4">Multi-pass membrane protein</topology>
    </subcellularLocation>
    <subcellularLocation>
        <location evidence="3">Cytoplasmic vesicle</location>
        <location evidence="3">Secretory vesicle membrane</location>
        <topology evidence="4">Multi-pass membrane protein</topology>
    </subcellularLocation>
    <text evidence="1">Also localizes at mitochondria-associated membranes (MAMs).</text>
</comment>
<comment type="tissue specificity">
    <text evidence="19">Expressed in intestinal crypt and villus epithelial cells.</text>
</comment>
<comment type="domain">
    <text evidence="14 16 17">Composed of a large N-terminal cytoplasmic domain (CD) followed by a juxtamembrane domain (JD) and a transmembrane domain (TMD).</text>
</comment>
<comment type="PTM">
    <text evidence="1">Phosphorylated by AKT1 on serine and/or threonine residues (By similarity).</text>
</comment>
<comment type="disease" evidence="11 15">
    <disease id="DI-06544">
        <name>Charcot-Marie-Tooth disease, demyelinating, type 1J</name>
        <acronym>CMT1J</acronym>
        <description>An autosomal dominant demyelinating form of Charcot-Marie-Tooth disease, a disorder of the peripheral nervous system, characterized by progressive weakness and atrophy, initially of the peroneal muscles and later of the distal muscles of the arms. Charcot-Marie-Tooth disease is classified in two main groups on the basis of electrophysiologic properties and histopathology: primary peripheral demyelinating neuropathies (designated CMT1 when they are dominantly inherited) and primary peripheral axonal neuropathies (CMT2). Demyelinating neuropathies are characterized by severely reduced nerve conduction velocities (less than 38 m/sec), segmental demyelination and remyelination with onion bulb formations on nerve biopsy, slowly progressive distal muscle atrophy and weakness, absent deep tendon reflexes, and hollow feet.</description>
        <dbReference type="MIM" id="620111"/>
    </disease>
    <text>The disease is caused by variants affecting the gene represented in this entry.</text>
</comment>
<comment type="similarity">
    <text evidence="22">Belongs to the InsP3 receptor family.</text>
</comment>
<gene>
    <name evidence="24" type="primary">ITPR3</name>
</gene>
<feature type="chain" id="PRO_0000153928" description="Inositol 1,4,5-trisphosphate-gated calcium channel ITPR3">
    <location>
        <begin position="1"/>
        <end position="2671"/>
    </location>
</feature>
<feature type="topological domain" description="Cytoplasmic" evidence="4">
    <location>
        <begin position="1"/>
        <end position="2202"/>
    </location>
</feature>
<feature type="transmembrane region" description="Helical" evidence="4">
    <location>
        <begin position="2203"/>
        <end position="2223"/>
    </location>
</feature>
<feature type="topological domain" description="Extracellular" evidence="4">
    <location>
        <begin position="2224"/>
        <end position="2235"/>
    </location>
</feature>
<feature type="transmembrane region" description="Helical" evidence="4">
    <location>
        <begin position="2236"/>
        <end position="2256"/>
    </location>
</feature>
<feature type="topological domain" description="Cytoplasmic" evidence="4">
    <location>
        <begin position="2257"/>
        <end position="2264"/>
    </location>
</feature>
<feature type="transmembrane region" description="Helical" evidence="4">
    <location>
        <begin position="2265"/>
        <end position="2285"/>
    </location>
</feature>
<feature type="topological domain" description="Extracellular" evidence="4">
    <location>
        <begin position="2286"/>
        <end position="2325"/>
    </location>
</feature>
<feature type="transmembrane region" description="Helical" evidence="4">
    <location>
        <begin position="2326"/>
        <end position="2346"/>
    </location>
</feature>
<feature type="topological domain" description="Cytoplasmic" evidence="4">
    <location>
        <begin position="2347"/>
        <end position="2368"/>
    </location>
</feature>
<feature type="transmembrane region" description="Helical" evidence="4">
    <location>
        <begin position="2369"/>
        <end position="2389"/>
    </location>
</feature>
<feature type="topological domain" description="Extracellular" evidence="4">
    <location>
        <begin position="2390"/>
        <end position="2496"/>
    </location>
</feature>
<feature type="transmembrane region" description="Helical" evidence="4">
    <location>
        <begin position="2497"/>
        <end position="2517"/>
    </location>
</feature>
<feature type="topological domain" description="Cytoplasmic" evidence="4">
    <location>
        <begin position="2518"/>
        <end position="2671"/>
    </location>
</feature>
<feature type="domain" description="MIR 1" evidence="5">
    <location>
        <begin position="113"/>
        <end position="173"/>
    </location>
</feature>
<feature type="domain" description="MIR 2" evidence="5">
    <location>
        <begin position="174"/>
        <end position="224"/>
    </location>
</feature>
<feature type="domain" description="MIR 3" evidence="5">
    <location>
        <begin position="232"/>
        <end position="288"/>
    </location>
</feature>
<feature type="domain" description="MIR 4" evidence="5">
    <location>
        <begin position="295"/>
        <end position="372"/>
    </location>
</feature>
<feature type="domain" description="MIR 5" evidence="5">
    <location>
        <begin position="378"/>
        <end position="434"/>
    </location>
</feature>
<feature type="region of interest" description="Disordered" evidence="6">
    <location>
        <begin position="322"/>
        <end position="342"/>
    </location>
</feature>
<feature type="region of interest" description="Disordered" evidence="6">
    <location>
        <begin position="1132"/>
        <end position="1163"/>
    </location>
</feature>
<feature type="region of interest" description="Disordered" evidence="6">
    <location>
        <begin position="1809"/>
        <end position="1848"/>
    </location>
</feature>
<feature type="binding site" evidence="14 16 17 30 35 43">
    <location>
        <position position="266"/>
    </location>
    <ligand>
        <name>1D-myo-inositol 1,4,5-trisphosphate</name>
        <dbReference type="ChEBI" id="CHEBI:203600"/>
    </ligand>
</feature>
<feature type="binding site" evidence="14 16 17 30 35 43">
    <location>
        <position position="268"/>
    </location>
    <ligand>
        <name>1D-myo-inositol 1,4,5-trisphosphate</name>
        <dbReference type="ChEBI" id="CHEBI:203600"/>
    </ligand>
</feature>
<feature type="binding site" evidence="14 16 17 30 35 43">
    <location>
        <position position="269"/>
    </location>
    <ligand>
        <name>1D-myo-inositol 1,4,5-trisphosphate</name>
        <dbReference type="ChEBI" id="CHEBI:203600"/>
    </ligand>
</feature>
<feature type="binding site" evidence="16 17 35 43">
    <location>
        <position position="270"/>
    </location>
    <ligand>
        <name>1D-myo-inositol 1,4,5-trisphosphate</name>
        <dbReference type="ChEBI" id="CHEBI:203600"/>
    </ligand>
</feature>
<feature type="binding site" evidence="14 23 30">
    <location>
        <position position="503"/>
    </location>
    <ligand>
        <name>1D-myo-inositol 1,4,5-trisphosphate</name>
        <dbReference type="ChEBI" id="CHEBI:203600"/>
    </ligand>
</feature>
<feature type="binding site" evidence="14 16 17 27 35 43">
    <location>
        <position position="507"/>
    </location>
    <ligand>
        <name>1D-myo-inositol 1,4,5-trisphosphate</name>
        <dbReference type="ChEBI" id="CHEBI:203600"/>
    </ligand>
</feature>
<feature type="binding site" evidence="14 16 17 30 35 43">
    <location>
        <position position="510"/>
    </location>
    <ligand>
        <name>1D-myo-inositol 1,4,5-trisphosphate</name>
        <dbReference type="ChEBI" id="CHEBI:203600"/>
    </ligand>
</feature>
<feature type="binding site" evidence="14 16 17 30 35 43">
    <location>
        <position position="567"/>
    </location>
    <ligand>
        <name>1D-myo-inositol 1,4,5-trisphosphate</name>
        <dbReference type="ChEBI" id="CHEBI:203600"/>
    </ligand>
</feature>
<feature type="binding site" evidence="14 16 17 30 35 43">
    <location>
        <position position="568"/>
    </location>
    <ligand>
        <name>1D-myo-inositol 1,4,5-trisphosphate</name>
        <dbReference type="ChEBI" id="CHEBI:203600"/>
    </ligand>
</feature>
<feature type="binding site" evidence="14 16 17 30 35 43">
    <location>
        <position position="569"/>
    </location>
    <ligand>
        <name>1D-myo-inositol 1,4,5-trisphosphate</name>
        <dbReference type="ChEBI" id="CHEBI:203600"/>
    </ligand>
</feature>
<feature type="binding site" evidence="14 33">
    <location>
        <position position="743"/>
    </location>
    <ligand>
        <name>Ca(2+)</name>
        <dbReference type="ChEBI" id="CHEBI:29108"/>
        <label>1</label>
        <note>low affinity</note>
    </ligand>
</feature>
<feature type="binding site" evidence="14 32 33">
    <location>
        <position position="1122"/>
    </location>
    <ligand>
        <name>Ca(2+)</name>
        <dbReference type="ChEBI" id="CHEBI:29108"/>
        <label>1</label>
        <note>low affinity</note>
    </ligand>
</feature>
<feature type="binding site" evidence="14 17 32 44">
    <location>
        <position position="1125"/>
    </location>
    <ligand>
        <name>Ca(2+)</name>
        <dbReference type="ChEBI" id="CHEBI:29108"/>
        <label>1</label>
        <note>low affinity</note>
    </ligand>
</feature>
<feature type="binding site" evidence="14 16 17 33 39 47">
    <location>
        <position position="1882"/>
    </location>
    <ligand>
        <name>Ca(2+)</name>
        <dbReference type="ChEBI" id="CHEBI:29108"/>
        <label>2</label>
        <note>high affinity</note>
    </ligand>
</feature>
<feature type="binding site" evidence="14 16 17 33 39 47">
    <location>
        <position position="1946"/>
    </location>
    <ligand>
        <name>Ca(2+)</name>
        <dbReference type="ChEBI" id="CHEBI:29108"/>
        <label>2</label>
        <note>high affinity</note>
    </ligand>
</feature>
<feature type="binding site" evidence="16 37">
    <location>
        <position position="1996"/>
    </location>
    <ligand>
        <name>ATP</name>
        <dbReference type="ChEBI" id="CHEBI:30616"/>
    </ligand>
</feature>
<feature type="binding site" evidence="16 37">
    <location>
        <position position="2149"/>
    </location>
    <ligand>
        <name>ATP</name>
        <dbReference type="ChEBI" id="CHEBI:30616"/>
    </ligand>
</feature>
<feature type="binding site" evidence="16 17 37 44">
    <location>
        <position position="2152"/>
    </location>
    <ligand>
        <name>ATP</name>
        <dbReference type="ChEBI" id="CHEBI:30616"/>
    </ligand>
</feature>
<feature type="binding site" evidence="16 35">
    <location>
        <position position="2538"/>
    </location>
    <ligand>
        <name>ATP</name>
        <dbReference type="ChEBI" id="CHEBI:30616"/>
    </ligand>
</feature>
<feature type="binding site" evidence="14 16 17 31 35 41">
    <location>
        <position position="2538"/>
    </location>
    <ligand>
        <name>Zn(2+)</name>
        <dbReference type="ChEBI" id="CHEBI:29105"/>
    </ligand>
</feature>
<feature type="binding site" evidence="16 17 37 44">
    <location>
        <position position="2539"/>
    </location>
    <ligand>
        <name>ATP</name>
        <dbReference type="ChEBI" id="CHEBI:30616"/>
    </ligand>
</feature>
<feature type="binding site" evidence="14 16 17 31 35 41">
    <location>
        <position position="2541"/>
    </location>
    <ligand>
        <name>Zn(2+)</name>
        <dbReference type="ChEBI" id="CHEBI:29105"/>
    </ligand>
</feature>
<feature type="binding site" evidence="14 16 17 31 35 41">
    <location>
        <position position="2558"/>
    </location>
    <ligand>
        <name>Zn(2+)</name>
        <dbReference type="ChEBI" id="CHEBI:29105"/>
    </ligand>
</feature>
<feature type="binding site" evidence="16 17 37 44">
    <location>
        <position position="2560"/>
    </location>
    <ligand>
        <name>ATP</name>
        <dbReference type="ChEBI" id="CHEBI:30616"/>
    </ligand>
</feature>
<feature type="binding site" evidence="16 17 37 44">
    <location>
        <position position="2563"/>
    </location>
    <ligand>
        <name>ATP</name>
        <dbReference type="ChEBI" id="CHEBI:30616"/>
    </ligand>
</feature>
<feature type="binding site" evidence="14 16 17 31 35 41">
    <location>
        <position position="2563"/>
    </location>
    <ligand>
        <name>Zn(2+)</name>
        <dbReference type="ChEBI" id="CHEBI:29105"/>
    </ligand>
</feature>
<feature type="binding site" evidence="16 17 25 37">
    <location>
        <position position="2564"/>
    </location>
    <ligand>
        <name>ATP</name>
        <dbReference type="ChEBI" id="CHEBI:30616"/>
    </ligand>
</feature>
<feature type="binding site" evidence="16 17 37 46">
    <location>
        <position position="2565"/>
    </location>
    <ligand>
        <name>ATP</name>
        <dbReference type="ChEBI" id="CHEBI:30616"/>
    </ligand>
</feature>
<feature type="binding site" evidence="14 16 17 33 39 47">
    <location>
        <position position="2581"/>
    </location>
    <ligand>
        <name>Ca(2+)</name>
        <dbReference type="ChEBI" id="CHEBI:29108"/>
        <label>2</label>
        <note>high affinity</note>
    </ligand>
</feature>
<feature type="modified residue" description="Phosphoserine" evidence="49 51 52">
    <location>
        <position position="916"/>
    </location>
</feature>
<feature type="modified residue" description="Phosphoserine" evidence="49 52">
    <location>
        <position position="934"/>
    </location>
</feature>
<feature type="modified residue" description="Phosphoserine" evidence="50">
    <location>
        <position position="1813"/>
    </location>
</feature>
<feature type="modified residue" description="Phosphoserine" evidence="49 52 53">
    <location>
        <position position="1832"/>
    </location>
</feature>
<feature type="modified residue" description="Phosphoserine" evidence="52">
    <location>
        <position position="1834"/>
    </location>
</feature>
<feature type="modified residue" description="Phosphoserine" evidence="52">
    <location>
        <position position="2609"/>
    </location>
</feature>
<feature type="modified residue" description="Phosphoserine" evidence="51 52">
    <location>
        <position position="2670"/>
    </location>
</feature>
<feature type="disulfide bond" evidence="16 35 36 37 38 39">
    <location>
        <begin position="2455"/>
        <end position="2461"/>
    </location>
</feature>
<feature type="sequence variant" id="VAR_049604" description="In dbSNP:rs2229646.">
    <original>L</original>
    <variation>W</variation>
    <location>
        <position position="374"/>
    </location>
</feature>
<feature type="sequence variant" id="VAR_087822" description="In CMT1J; decreased inositol trisphosphate-mediated calcium release and altered calcium homeostasis in patient fibroblasts." evidence="15">
    <original>V</original>
    <variation>M</variation>
    <location>
        <position position="615"/>
    </location>
</feature>
<feature type="sequence variant" id="VAR_046978" description="In dbSNP:rs11963294.">
    <original>R</original>
    <variation>Q</variation>
    <location>
        <position position="667"/>
    </location>
</feature>
<feature type="sequence variant" id="VAR_046979" description="In dbSNP:rs2229633.">
    <original>D</original>
    <variation>E</variation>
    <location>
        <position position="742"/>
    </location>
</feature>
<feature type="sequence variant" id="VAR_046980" description="In dbSNP:rs2296333.">
    <original>G</original>
    <variation>V</variation>
    <location>
        <position position="1029"/>
    </location>
</feature>
<feature type="sequence variant" id="VAR_087823" description="In CMT1J; uncertain significance." evidence="11">
    <original>T</original>
    <variation>M</variation>
    <location>
        <position position="1424"/>
    </location>
</feature>
<feature type="sequence variant" id="VAR_046981" description="In dbSNP:rs9461899.">
    <original>L</original>
    <variation>V</variation>
    <location>
        <position position="1552"/>
    </location>
</feature>
<feature type="sequence variant" id="VAR_046982" description="In dbSNP:rs12528378.">
    <original>R</original>
    <variation>Q</variation>
    <location>
        <position position="1850"/>
    </location>
</feature>
<feature type="sequence variant" id="VAR_046983" description="In dbSNP:rs2229641.">
    <original>E</original>
    <variation>Q</variation>
    <location>
        <position position="2398"/>
    </location>
</feature>
<feature type="sequence variant" id="VAR_046984" description="In dbSNP:rs2229642." evidence="18">
    <original>L</original>
    <variation>V</variation>
    <location>
        <position position="2436"/>
    </location>
</feature>
<feature type="sequence variant" id="VAR_087824" description="In CMT1J." evidence="15">
    <original>R</original>
    <variation>C</variation>
    <location>
        <position position="2524"/>
    </location>
</feature>
<feature type="sequence conflict" description="In Ref. 2; AAC50064." evidence="22" ref="2">
    <original>A</original>
    <variation>V</variation>
    <location>
        <position position="524"/>
    </location>
</feature>
<feature type="sequence conflict" description="In Ref. 2; AAC50064." evidence="22" ref="2">
    <original>H</original>
    <variation>Y</variation>
    <location>
        <position position="562"/>
    </location>
</feature>
<feature type="sequence conflict" description="In Ref. 1; BAA05385." evidence="22" ref="1">
    <original>Y</original>
    <variation>H</variation>
    <location>
        <position position="989"/>
    </location>
</feature>
<feature type="sequence conflict" description="In Ref. 2; AAC50064." evidence="22" ref="2">
    <original>A</original>
    <variation>T</variation>
    <location>
        <position position="1143"/>
    </location>
</feature>
<feature type="sequence conflict" description="In Ref. 2; AAC50064." evidence="22" ref="2">
    <original>L</original>
    <variation>V</variation>
    <location>
        <position position="1391"/>
    </location>
</feature>
<feature type="sequence conflict" description="In Ref. 2; AAC50064." evidence="22" ref="2">
    <original>TI</original>
    <variation>PV</variation>
    <location>
        <begin position="1496"/>
        <end position="1497"/>
    </location>
</feature>
<feature type="sequence conflict" description="In Ref. 2; AAC50064." evidence="22" ref="2">
    <original>L</original>
    <variation>V</variation>
    <location>
        <position position="1674"/>
    </location>
</feature>
<feature type="sequence conflict" description="In Ref. 1; BAA05385 and 2; AAC50064." evidence="22" ref="1 2">
    <original>KL</original>
    <variation>NV</variation>
    <location>
        <begin position="2187"/>
        <end position="2188"/>
    </location>
</feature>
<name>ITPR3_HUMAN</name>
<reference key="1">
    <citation type="journal article" date="1994" name="Recept. Channels">
        <title>Cloning and characterization of human type 2 and type 3 inositol 1,4,5-trisphosphate receptors.</title>
        <authorList>
            <person name="Yamamoto-Hino M."/>
            <person name="Sugiyama T."/>
            <person name="Hikiti K."/>
            <person name="Mattei M.-G."/>
            <person name="Hasegawa K."/>
            <person name="Sekine S."/>
            <person name="Sakurada K."/>
            <person name="Miyawaki A."/>
            <person name="Furuichi T."/>
            <person name="Hasegawa M."/>
            <person name="Mikoshiba K."/>
        </authorList>
    </citation>
    <scope>NUCLEOTIDE SEQUENCE [MRNA]</scope>
    <scope>FUNCTION</scope>
    <scope>VARIANT VAL-2436</scope>
</reference>
<reference key="2">
    <citation type="journal article" date="1994" name="J. Biol. Chem.">
        <title>Primary structure, ligand binding, and localization of the human type 3 inositol 1,4,5-trisphosphate receptor expressed in intestinal epithelium.</title>
        <authorList>
            <person name="Maranto A.R."/>
        </authorList>
    </citation>
    <scope>NUCLEOTIDE SEQUENCE [MRNA]</scope>
    <scope>FUNCTION</scope>
    <scope>TISSUE SPECIFICITY</scope>
    <scope>DOMAIN</scope>
</reference>
<reference key="3">
    <citation type="journal article" date="2003" name="Nature">
        <title>The DNA sequence and analysis of human chromosome 6.</title>
        <authorList>
            <person name="Mungall A.J."/>
            <person name="Palmer S.A."/>
            <person name="Sims S.K."/>
            <person name="Edwards C.A."/>
            <person name="Ashurst J.L."/>
            <person name="Wilming L."/>
            <person name="Jones M.C."/>
            <person name="Horton R."/>
            <person name="Hunt S.E."/>
            <person name="Scott C.E."/>
            <person name="Gilbert J.G.R."/>
            <person name="Clamp M.E."/>
            <person name="Bethel G."/>
            <person name="Milne S."/>
            <person name="Ainscough R."/>
            <person name="Almeida J.P."/>
            <person name="Ambrose K.D."/>
            <person name="Andrews T.D."/>
            <person name="Ashwell R.I.S."/>
            <person name="Babbage A.K."/>
            <person name="Bagguley C.L."/>
            <person name="Bailey J."/>
            <person name="Banerjee R."/>
            <person name="Barker D.J."/>
            <person name="Barlow K.F."/>
            <person name="Bates K."/>
            <person name="Beare D.M."/>
            <person name="Beasley H."/>
            <person name="Beasley O."/>
            <person name="Bird C.P."/>
            <person name="Blakey S.E."/>
            <person name="Bray-Allen S."/>
            <person name="Brook J."/>
            <person name="Brown A.J."/>
            <person name="Brown J.Y."/>
            <person name="Burford D.C."/>
            <person name="Burrill W."/>
            <person name="Burton J."/>
            <person name="Carder C."/>
            <person name="Carter N.P."/>
            <person name="Chapman J.C."/>
            <person name="Clark S.Y."/>
            <person name="Clark G."/>
            <person name="Clee C.M."/>
            <person name="Clegg S."/>
            <person name="Cobley V."/>
            <person name="Collier R.E."/>
            <person name="Collins J.E."/>
            <person name="Colman L.K."/>
            <person name="Corby N.R."/>
            <person name="Coville G.J."/>
            <person name="Culley K.M."/>
            <person name="Dhami P."/>
            <person name="Davies J."/>
            <person name="Dunn M."/>
            <person name="Earthrowl M.E."/>
            <person name="Ellington A.E."/>
            <person name="Evans K.A."/>
            <person name="Faulkner L."/>
            <person name="Francis M.D."/>
            <person name="Frankish A."/>
            <person name="Frankland J."/>
            <person name="French L."/>
            <person name="Garner P."/>
            <person name="Garnett J."/>
            <person name="Ghori M.J."/>
            <person name="Gilby L.M."/>
            <person name="Gillson C.J."/>
            <person name="Glithero R.J."/>
            <person name="Grafham D.V."/>
            <person name="Grant M."/>
            <person name="Gribble S."/>
            <person name="Griffiths C."/>
            <person name="Griffiths M.N.D."/>
            <person name="Hall R."/>
            <person name="Halls K.S."/>
            <person name="Hammond S."/>
            <person name="Harley J.L."/>
            <person name="Hart E.A."/>
            <person name="Heath P.D."/>
            <person name="Heathcott R."/>
            <person name="Holmes S.J."/>
            <person name="Howden P.J."/>
            <person name="Howe K.L."/>
            <person name="Howell G.R."/>
            <person name="Huckle E."/>
            <person name="Humphray S.J."/>
            <person name="Humphries M.D."/>
            <person name="Hunt A.R."/>
            <person name="Johnson C.M."/>
            <person name="Joy A.A."/>
            <person name="Kay M."/>
            <person name="Keenan S.J."/>
            <person name="Kimberley A.M."/>
            <person name="King A."/>
            <person name="Laird G.K."/>
            <person name="Langford C."/>
            <person name="Lawlor S."/>
            <person name="Leongamornlert D.A."/>
            <person name="Leversha M."/>
            <person name="Lloyd C.R."/>
            <person name="Lloyd D.M."/>
            <person name="Loveland J.E."/>
            <person name="Lovell J."/>
            <person name="Martin S."/>
            <person name="Mashreghi-Mohammadi M."/>
            <person name="Maslen G.L."/>
            <person name="Matthews L."/>
            <person name="McCann O.T."/>
            <person name="McLaren S.J."/>
            <person name="McLay K."/>
            <person name="McMurray A."/>
            <person name="Moore M.J.F."/>
            <person name="Mullikin J.C."/>
            <person name="Niblett D."/>
            <person name="Nickerson T."/>
            <person name="Novik K.L."/>
            <person name="Oliver K."/>
            <person name="Overton-Larty E.K."/>
            <person name="Parker A."/>
            <person name="Patel R."/>
            <person name="Pearce A.V."/>
            <person name="Peck A.I."/>
            <person name="Phillimore B.J.C.T."/>
            <person name="Phillips S."/>
            <person name="Plumb R.W."/>
            <person name="Porter K.M."/>
            <person name="Ramsey Y."/>
            <person name="Ranby S.A."/>
            <person name="Rice C.M."/>
            <person name="Ross M.T."/>
            <person name="Searle S.M."/>
            <person name="Sehra H.K."/>
            <person name="Sheridan E."/>
            <person name="Skuce C.D."/>
            <person name="Smith S."/>
            <person name="Smith M."/>
            <person name="Spraggon L."/>
            <person name="Squares S.L."/>
            <person name="Steward C.A."/>
            <person name="Sycamore N."/>
            <person name="Tamlyn-Hall G."/>
            <person name="Tester J."/>
            <person name="Theaker A.J."/>
            <person name="Thomas D.W."/>
            <person name="Thorpe A."/>
            <person name="Tracey A."/>
            <person name="Tromans A."/>
            <person name="Tubby B."/>
            <person name="Wall M."/>
            <person name="Wallis J.M."/>
            <person name="West A.P."/>
            <person name="White S.S."/>
            <person name="Whitehead S.L."/>
            <person name="Whittaker H."/>
            <person name="Wild A."/>
            <person name="Willey D.J."/>
            <person name="Wilmer T.E."/>
            <person name="Wood J.M."/>
            <person name="Wray P.W."/>
            <person name="Wyatt J.C."/>
            <person name="Young L."/>
            <person name="Younger R.M."/>
            <person name="Bentley D.R."/>
            <person name="Coulson A."/>
            <person name="Durbin R.M."/>
            <person name="Hubbard T."/>
            <person name="Sulston J.E."/>
            <person name="Dunham I."/>
            <person name="Rogers J."/>
            <person name="Beck S."/>
        </authorList>
    </citation>
    <scope>NUCLEOTIDE SEQUENCE [LARGE SCALE GENOMIC DNA]</scope>
</reference>
<reference key="4">
    <citation type="submission" date="2005-07" db="EMBL/GenBank/DDBJ databases">
        <authorList>
            <person name="Mural R.J."/>
            <person name="Istrail S."/>
            <person name="Sutton G.G."/>
            <person name="Florea L."/>
            <person name="Halpern A.L."/>
            <person name="Mobarry C.M."/>
            <person name="Lippert R."/>
            <person name="Walenz B."/>
            <person name="Shatkay H."/>
            <person name="Dew I."/>
            <person name="Miller J.R."/>
            <person name="Flanigan M.J."/>
            <person name="Edwards N.J."/>
            <person name="Bolanos R."/>
            <person name="Fasulo D."/>
            <person name="Halldorsson B.V."/>
            <person name="Hannenhalli S."/>
            <person name="Turner R."/>
            <person name="Yooseph S."/>
            <person name="Lu F."/>
            <person name="Nusskern D.R."/>
            <person name="Shue B.C."/>
            <person name="Zheng X.H."/>
            <person name="Zhong F."/>
            <person name="Delcher A.L."/>
            <person name="Huson D.H."/>
            <person name="Kravitz S.A."/>
            <person name="Mouchard L."/>
            <person name="Reinert K."/>
            <person name="Remington K.A."/>
            <person name="Clark A.G."/>
            <person name="Waterman M.S."/>
            <person name="Eichler E.E."/>
            <person name="Adams M.D."/>
            <person name="Hunkapiller M.W."/>
            <person name="Myers E.W."/>
            <person name="Venter J.C."/>
        </authorList>
    </citation>
    <scope>NUCLEOTIDE SEQUENCE [LARGE SCALE GENOMIC DNA]</scope>
</reference>
<reference key="5">
    <citation type="journal article" date="2002" name="Proc. Natl. Acad. Sci. U.S.A.">
        <title>Identification of a family of calcium sensors as protein ligands of inositol trisphosphate receptor Ca(2+) release channels.</title>
        <authorList>
            <person name="Yang J."/>
            <person name="McBride S."/>
            <person name="Mak D.-O.D."/>
            <person name="Vardi N."/>
            <person name="Palczewski K."/>
            <person name="Haeseleer F."/>
            <person name="Foskett J.K."/>
        </authorList>
    </citation>
    <scope>INTERACTION WITH CABP1</scope>
</reference>
<reference key="6">
    <citation type="journal article" date="2008" name="J. Biol. Chem.">
        <title>IP3 receptor binds to and sensitizes TRPV4 channel to osmotic stimuli via a calmodulin-binding site.</title>
        <authorList>
            <person name="Garcia-Elias A."/>
            <person name="Lorenzo I.M."/>
            <person name="Vicente R."/>
            <person name="Valverde M.A."/>
        </authorList>
    </citation>
    <scope>INTERACTION WITH TRPV4</scope>
</reference>
<reference key="7">
    <citation type="journal article" date="2008" name="Proc. Natl. Acad. Sci. U.S.A.">
        <title>A quantitative atlas of mitotic phosphorylation.</title>
        <authorList>
            <person name="Dephoure N."/>
            <person name="Zhou C."/>
            <person name="Villen J."/>
            <person name="Beausoleil S.A."/>
            <person name="Bakalarski C.E."/>
            <person name="Elledge S.J."/>
            <person name="Gygi S.P."/>
        </authorList>
    </citation>
    <scope>PHOSPHORYLATION [LARGE SCALE ANALYSIS] AT SER-916; SER-934 AND SER-1832</scope>
    <scope>IDENTIFICATION BY MASS SPECTROMETRY [LARGE SCALE ANALYSIS]</scope>
    <source>
        <tissue>Cervix carcinoma</tissue>
    </source>
</reference>
<reference key="8">
    <citation type="journal article" date="2009" name="Mol. Biol. Cell">
        <title>Human Golgi antiapoptotic protein modulates intracellular calcium fluxes.</title>
        <authorList>
            <person name="de Mattia F."/>
            <person name="Gubser C."/>
            <person name="van Dommelen M.M."/>
            <person name="Visch H.J."/>
            <person name="Distelmaier F."/>
            <person name="Postigo A."/>
            <person name="Luyten T."/>
            <person name="Parys J.B."/>
            <person name="de Smedt H."/>
            <person name="Smith G.L."/>
            <person name="Willems P.H."/>
            <person name="van Kuppeveld F.J."/>
        </authorList>
    </citation>
    <scope>INTERACTION WITH TMBIM4/LFG4</scope>
</reference>
<reference key="9">
    <citation type="journal article" date="2009" name="Sci. Signal.">
        <title>Quantitative phosphoproteomic analysis of T cell receptor signaling reveals system-wide modulation of protein-protein interactions.</title>
        <authorList>
            <person name="Mayya V."/>
            <person name="Lundgren D.H."/>
            <person name="Hwang S.-I."/>
            <person name="Rezaul K."/>
            <person name="Wu L."/>
            <person name="Eng J.K."/>
            <person name="Rodionov V."/>
            <person name="Han D.K."/>
        </authorList>
    </citation>
    <scope>PHOSPHORYLATION [LARGE SCALE ANALYSIS] AT SER-1813</scope>
    <scope>IDENTIFICATION BY MASS SPECTROMETRY [LARGE SCALE ANALYSIS]</scope>
    <source>
        <tissue>Leukemic T-cell</tissue>
    </source>
</reference>
<reference key="10">
    <citation type="journal article" date="2010" name="Sci. Signal.">
        <title>Quantitative phosphoproteomics reveals widespread full phosphorylation site occupancy during mitosis.</title>
        <authorList>
            <person name="Olsen J.V."/>
            <person name="Vermeulen M."/>
            <person name="Santamaria A."/>
            <person name="Kumar C."/>
            <person name="Miller M.L."/>
            <person name="Jensen L.J."/>
            <person name="Gnad F."/>
            <person name="Cox J."/>
            <person name="Jensen T.S."/>
            <person name="Nigg E.A."/>
            <person name="Brunak S."/>
            <person name="Mann M."/>
        </authorList>
    </citation>
    <scope>PHOSPHORYLATION [LARGE SCALE ANALYSIS] AT SER-916 AND SER-2670</scope>
    <scope>IDENTIFICATION BY MASS SPECTROMETRY [LARGE SCALE ANALYSIS]</scope>
    <source>
        <tissue>Cervix carcinoma</tissue>
    </source>
</reference>
<reference key="11">
    <citation type="journal article" date="2011" name="BMC Syst. Biol.">
        <title>Initial characterization of the human central proteome.</title>
        <authorList>
            <person name="Burkard T.R."/>
            <person name="Planyavsky M."/>
            <person name="Kaupe I."/>
            <person name="Breitwieser F.P."/>
            <person name="Buerckstuemmer T."/>
            <person name="Bennett K.L."/>
            <person name="Superti-Furga G."/>
            <person name="Colinge J."/>
        </authorList>
    </citation>
    <scope>IDENTIFICATION BY MASS SPECTROMETRY [LARGE SCALE ANALYSIS]</scope>
</reference>
<reference key="12">
    <citation type="journal article" date="2013" name="J. Proteome Res.">
        <title>Toward a comprehensive characterization of a human cancer cell phosphoproteome.</title>
        <authorList>
            <person name="Zhou H."/>
            <person name="Di Palma S."/>
            <person name="Preisinger C."/>
            <person name="Peng M."/>
            <person name="Polat A.N."/>
            <person name="Heck A.J."/>
            <person name="Mohammed S."/>
        </authorList>
    </citation>
    <scope>PHOSPHORYLATION [LARGE SCALE ANALYSIS] AT SER-916; SER-934; SER-1832; SER-1834; SER-2609 AND SER-2670</scope>
    <scope>IDENTIFICATION BY MASS SPECTROMETRY [LARGE SCALE ANALYSIS]</scope>
    <source>
        <tissue>Cervix carcinoma</tissue>
        <tissue>Erythroleukemia</tissue>
    </source>
</reference>
<reference key="13">
    <citation type="journal article" date="2013" name="PLoS ONE">
        <title>Early insights into the function of KIAA1199, a markedly overexpressed protein in human colorectal tumors.</title>
        <authorList>
            <person name="Tiwari A."/>
            <person name="Schneider M."/>
            <person name="Fiorino A."/>
            <person name="Haider R."/>
            <person name="Okoniewski M.J."/>
            <person name="Roschitzki B."/>
            <person name="Uzozie A."/>
            <person name="Menigatti M."/>
            <person name="Jiricny J."/>
            <person name="Marra G."/>
        </authorList>
    </citation>
    <scope>INTERACTION WITH CEMIP</scope>
</reference>
<reference key="14">
    <citation type="journal article" date="2014" name="J. Proteomics">
        <title>An enzyme assisted RP-RPLC approach for in-depth analysis of human liver phosphoproteome.</title>
        <authorList>
            <person name="Bian Y."/>
            <person name="Song C."/>
            <person name="Cheng K."/>
            <person name="Dong M."/>
            <person name="Wang F."/>
            <person name="Huang J."/>
            <person name="Sun D."/>
            <person name="Wang L."/>
            <person name="Ye M."/>
            <person name="Zou H."/>
        </authorList>
    </citation>
    <scope>PHOSPHORYLATION [LARGE SCALE ANALYSIS] AT SER-1832</scope>
    <scope>IDENTIFICATION BY MASS SPECTROMETRY [LARGE SCALE ANALYSIS]</scope>
    <source>
        <tissue>Liver</tissue>
    </source>
</reference>
<reference key="15">
    <citation type="journal article" date="2015" name="PLoS ONE">
        <title>TMEM203 is a novel regulator of intracellular calcium homeostasis and is required for spermatogenesis.</title>
        <authorList>
            <person name="Shambharkar P.B."/>
            <person name="Bittinger M."/>
            <person name="Latario B."/>
            <person name="Xiong Z."/>
            <person name="Bandyopadhyay S."/>
            <person name="Davis V."/>
            <person name="Lin V."/>
            <person name="Yang Y."/>
            <person name="Valdez R."/>
            <person name="Labow M.A."/>
        </authorList>
    </citation>
    <scope>INTERACTION WITH TMEM203</scope>
</reference>
<reference key="16">
    <citation type="journal article" date="2016" name="Elife">
        <title>IRBIT controls apoptosis by interacting with the Bcl-2 homolog, Bcl2l10, and by promoting ER-mitochondria contact.</title>
        <authorList>
            <person name="Bonneau B."/>
            <person name="Ando H."/>
            <person name="Kawaai K."/>
            <person name="Hirose M."/>
            <person name="Takahashi-Iwanaga H."/>
            <person name="Mikoshiba K."/>
        </authorList>
    </citation>
    <scope>INTERACTION WITH BCL2L10</scope>
</reference>
<reference evidence="26 27 28 29 30 31 32 33 34" key="17">
    <citation type="journal article" date="2018" name="Nat. Struct. Mol. Biol.">
        <title>Structural basis for the regulation of inositol trisphosphate receptors by Ca2+ and IP3.</title>
        <authorList>
            <person name="Paknejad N."/>
            <person name="Hite R.K."/>
        </authorList>
    </citation>
    <scope>STRUCTURE BY ELECTRON MICROSCOPY (3.33 ANGSTROMS) IN COMPLEX WITH 1D-MYO-INOSITOL-1,4,5-TRIPHOSPHATE; ZINC AND CALCIUM</scope>
    <scope>FUNCTION</scope>
    <scope>ACTIVITY REGULATION</scope>
    <scope>SUBUNIT</scope>
    <scope>DOMAIN</scope>
</reference>
<reference evidence="35 36 37 38 39" key="18">
    <citation type="journal article" date="2022" name="Nat. Commun.">
        <title>Structural basis for activation and gating of IP3 receptors.</title>
        <authorList>
            <person name="Schmitz E.A."/>
            <person name="Takahashi H."/>
            <person name="Karakas E."/>
        </authorList>
    </citation>
    <scope>STRUCTURE BY ELECTRON MICROSCOPY (3.20 ANGSTROMS) OF 1-2611 IN COMPLEX WITH 1D-MYO-INOSITOL 1,4,5-TRISPHOSPHATE; ZINC; CALCIUM AND ATP</scope>
    <scope>ACTIVITY REGULATION</scope>
    <scope>SUBUNIT</scope>
    <scope>DOMAIN</scope>
    <scope>DISULFIDE BOND</scope>
</reference>
<reference evidence="40 41 42 43 44 45 46 47 48" key="19">
    <citation type="journal article" date="2023" name="Nat. Commun.">
        <title>Structural titration reveals Ca2+-dependent conformational landscape of the IP3 receptor.</title>
        <authorList>
            <person name="Paknejad N."/>
            <person name="Sapuru V."/>
            <person name="Hite R.K."/>
        </authorList>
    </citation>
    <scope>STRUCTURE BY ELECTRON MICROSCOPY (2.50 ANGSTROMS) IN COMPLEX WITH 1D-MYO-INOSITOL 1,4,5-TRISPHOSPHATE; CALCIUM; ZINC AND ATP</scope>
    <scope>FUNCTION</scope>
    <scope>TRANSPORTER ACTIVITY</scope>
    <scope>ACTIVITY REGULATION</scope>
    <scope>SUBUNIT</scope>
    <scope>DOMAIN</scope>
</reference>
<reference key="20">
    <citation type="journal article" date="2014" name="J. Neurol.">
        <title>Whole-exome sequencing in patients with inherited neuropathies: outcome and challenges.</title>
        <authorList>
            <person name="Schabhuettl M."/>
            <person name="Wieland T."/>
            <person name="Senderek J."/>
            <person name="Baets J."/>
            <person name="Timmerman V."/>
            <person name="De Jonghe P."/>
            <person name="Reilly M.M."/>
            <person name="Stieglbauer K."/>
            <person name="Laich E."/>
            <person name="Windhager R."/>
            <person name="Erwa W."/>
            <person name="Trajanoski S."/>
            <person name="Strom T.M."/>
            <person name="Auer-Grumbach M."/>
        </authorList>
    </citation>
    <scope>VARIANT CMT1J MET-1424</scope>
    <scope>INVOLVEMENT IN CMT1J</scope>
</reference>
<reference key="21">
    <citation type="journal article" date="2020" name="Ann. Clin. Transl. Neurol.">
        <title>Dominant mutations in ITPR3 cause Charcot-Marie-Tooth disease.</title>
        <authorList>
            <person name="Roenkkoe J."/>
            <person name="Molchanova S."/>
            <person name="Revah-Politi A."/>
            <person name="Pereira E.M."/>
            <person name="Auranen M."/>
            <person name="Toppila J."/>
            <person name="Kvist J."/>
            <person name="Ludwig A."/>
            <person name="Neumann J."/>
            <person name="Bultynck G."/>
            <person name="Humblet-Baron S."/>
            <person name="Liston A."/>
            <person name="Paetau A."/>
            <person name="Rivera C."/>
            <person name="Harms M.B."/>
            <person name="Tyynismaa H."/>
            <person name="Ylikallio E."/>
        </authorList>
    </citation>
    <scope>VARIANTS CMT1J MET-615 AND CYS-2524</scope>
    <scope>CHARACTERIZATION OF VARIANT CMT1J MET-615</scope>
    <scope>INVOLVEMENT IN CMT1J</scope>
    <scope>FUNCTION</scope>
</reference>
<organism>
    <name type="scientific">Homo sapiens</name>
    <name type="common">Human</name>
    <dbReference type="NCBI Taxonomy" id="9606"/>
    <lineage>
        <taxon>Eukaryota</taxon>
        <taxon>Metazoa</taxon>
        <taxon>Chordata</taxon>
        <taxon>Craniata</taxon>
        <taxon>Vertebrata</taxon>
        <taxon>Euteleostomi</taxon>
        <taxon>Mammalia</taxon>
        <taxon>Eutheria</taxon>
        <taxon>Euarchontoglires</taxon>
        <taxon>Primates</taxon>
        <taxon>Haplorrhini</taxon>
        <taxon>Catarrhini</taxon>
        <taxon>Hominidae</taxon>
        <taxon>Homo</taxon>
    </lineage>
</organism>
<proteinExistence type="evidence at protein level"/>
<accession>Q14573</accession>
<accession>Q14649</accession>
<accession>Q5TAQ2</accession>
<protein>
    <recommendedName>
        <fullName evidence="22">Inositol 1,4,5-trisphosphate-gated calcium channel ITPR3</fullName>
    </recommendedName>
    <alternativeName>
        <fullName>IP3 receptor isoform 3</fullName>
        <shortName evidence="2">IP3R-3</shortName>
        <shortName>InsP3R3</shortName>
    </alternativeName>
    <alternativeName>
        <fullName evidence="20 21">Type 3 inositol 1,4,5-trisphosphate receptor</fullName>
        <shortName>Type 3 InsP3 receptor</shortName>
    </alternativeName>
</protein>
<keyword id="KW-0002">3D-structure</keyword>
<keyword id="KW-0106">Calcium</keyword>
<keyword id="KW-0107">Calcium channel</keyword>
<keyword id="KW-0109">Calcium transport</keyword>
<keyword id="KW-0144">Charcot-Marie-Tooth disease</keyword>
<keyword id="KW-0968">Cytoplasmic vesicle</keyword>
<keyword id="KW-0225">Disease variant</keyword>
<keyword id="KW-1015">Disulfide bond</keyword>
<keyword id="KW-0256">Endoplasmic reticulum</keyword>
<keyword id="KW-0407">Ion channel</keyword>
<keyword id="KW-0406">Ion transport</keyword>
<keyword id="KW-1071">Ligand-gated ion channel</keyword>
<keyword id="KW-0472">Membrane</keyword>
<keyword id="KW-0523">Neurodegeneration</keyword>
<keyword id="KW-0622">Neuropathy</keyword>
<keyword id="KW-0597">Phosphoprotein</keyword>
<keyword id="KW-1267">Proteomics identification</keyword>
<keyword id="KW-0675">Receptor</keyword>
<keyword id="KW-1185">Reference proteome</keyword>
<keyword id="KW-0677">Repeat</keyword>
<keyword id="KW-0812">Transmembrane</keyword>
<keyword id="KW-1133">Transmembrane helix</keyword>
<keyword id="KW-0813">Transport</keyword>
<sequence length="2671" mass="304106">MSEMSSFLHIGDIVSLYAEGSVNGFISTLGLVDDRCVVEPAAGDLDNPPKKFRDCLFKVCPMNRYSAQKQYWKAKQTKQDKEKIADVVLLQKLQHAAQMEQKQNDTENKKVHGDVVKYGSVIQLLHMKSNKYLTVNKRLPALLEKNAMRVTLDATGNEGSWLFIQPFWKLRSNGDNVVVGDKVILNPVNAGQPLHASNYELSDNAGCKEVNSVNCNTSWKINLFMQFRDHLEEVLKGGDVVRLFHAEQEKFLTCDEYKGKLQVFLRTTLRQSATSATSSNALWEVEVVHHDPCRGGAGHWNGLYRFKHLATGNYLAAEENPSYKGDASDPKAAGMGAQGRTGRRNAGEKIKYCLVAVPHGNDIASLFELDPTTLQKTDSFVPRNSYVRLRHLCTNTWIQSTNVPIDIEEERPIRLMLGTCPTKEDKEAFAIVSVPVSEIRDLDFANDASSMLASAVEKLNEGFISQNDRRFVIQLLEDLVFFVSDVPNNGQNVLDIMVTKPNRERQKLMREQNILKQVFGILKAPFREKGGEGPLVRLEELSDQKNAPYQHMFRLCYRVLRHSQEDYRKNQEHIAKQFGMMQSQIGYDILAEDTITALLHNNRKLLEKHITKTEVETFVSLVRKNREPRFLDYLSDLCVSNHIAIPVTQELICKCVLDPKNSDILIRTELRPVKEMAQSHEYLSIEYSEEEVWLTWTDKNNEHHEKSVRQLAQEARAGNAHDENVLSYYRYQLKLFARMCLDRQYLAIDEISQQLGVDLIFLCMADEMLPFDLRASFCHLMLHVHVDRDPQELVTPVKFARLWTEIPTAITIKDYDSNLNASRDDKKNKFANTMEFVEDYLNNVVSEAVPFANEEKNKLTFEVVSLAHNLIYFGFYSFSELLRLTRTLLGIIDCVQGPPAMLQAYEDPGGKNVRRSIQGVGHMMSTMVLSRKQSVFSAPSLSAGASAAEPLDRSKFEENEDIVVMETKLKILEILQFILNVRLDYRISYLLSVFKKEFVEVFPMQDSGADGTAPAFDSTTANMNLDRIGEQAEAMFGVGKTSSMLEVDDEGGRMFLRVLIHLTMHDYAPLVSGALQLLFKHFSQRQEAMHTFKQVQLLISAQDVENYKVIKSELDRLRTMVEKSELWVDKKGSGKGEEVEAGAAKDKKERPTDEEGFLHPPGEKSSENYQIVKGILERLNKMCGVGEQMRKKQQRLLKNMDAHKVMLDLLQIPYDKGDAKMMEILRYTHQFLQKFCAGNPGNQALLHKHLHLFLTPGLLEAETMQHIFLNNYQLCSEISEPVLQHFVHLLATHGRHVQYLDFLHTVIKAEGKYVKKCQDMIMTELTNAGDDVVVFYNDKASLAHLLDMMKAARDGVEDHSPLMYHISLVDLLAACAEGKNVYTEIKCTSLLPLEDVVSVVTHEDCITEVKMAYVNFVNHCYVDTEVEMKEIYTSNHIWTLFENFTLDMARVCSKREKRVADPTLEKYVLSVVLDTINAFFSSPFSENSTSLQTHQTIVVQLLQSTTRLLECPWLQQQHKGSVEACIRTLAMVAKGRAILLPMDLDAHISSMLSSGASCAAAAQRNASSYKATTRAFPRVTPTANQWDYKNIIEKLQDIITALEERLKPLVQAELSVLVDVLHWPELLFLEGSEAYQRCESGGFLSKLIQHTKDLMESEEKLCIKVLRTLQQMLLKKTKYGDRGNQLRKMLLQNYLQNRKSTSRGDLPDPIGTGLDPDWSAIAATQCRLDKEGATKLVCDLITSTKNEKIFQESIGLAIHLLDGGNTEIQKSFHNLMMSDKKSERFFKVLHDRMKRAQQETKSTVAVNMNDLGSQPHEDREPVDPTTKGRVASFSIPGSSSRYSLGPSLRRGHEVSERVQSSEMGTSVLIMQPILRFLQLLCENHNRDLQNFLRCQNNKTNYNLVCETLQFLDIMCGSTTGGLGLLGLYINEDNVGLVIQTLETLTEYCQGPCHENQTCIVTHESNGIDIITALILNDISPLCKYRMDLVLQLKDNASKLLLALMESRHDSENAERILISLRPQELVDVIKKAYLQEEERENSEVSPREVGHNIYILALQLSRHNKQLQHLLKPVKRIQEEEAEGISSMLSLNNKQLSQMLKSSAPAQEEEEDPLAYYENHTSQIEIVRQDRSMEQIVFPVPGICQFLTEETKHRLFTTTEQDEQGSKVSDFFDQSSFLHNEMEWQRKLRSMPLIYWFSRRMTLWGSISFNLAVFINIIIAFFYPYMEGASTGVLDSPLISLLFWILICFSIAALFTKRYSIRPLIVALILRSIYYLGIGPTLNILGALNLTNKIVFVVSFVGNRGTFIRGYKAMVMDMEFLYHVGYILTSVLGLFAHELFYSILLFDLIYREETLFNVIKSVTRNGRSILLTALLALILVYLFSIVGFLFLKDDFILEVDRLPNNHSTASPLGMPHGAAAFVDTCSGDKMDCVSGLSVPEVLEEDRELDSTERACDTLLMCIVTVMNHGLRNGGGVGDILRKPSKDESLFPARVVYDLLFFFIVIIIVLNLIFGVIIDTFADLRSEKQKKEEILKTTCFICGLERDKFDNKTVSFEEHIKLEHNMWNYLYFIVLVRVKNKTDYTGPESYVAQMIKNKNLDWFPRMRAMSLVSNEGEGEQNEIRILQDKLNSTMKLVSHLTAQLNELKEQMTEQRKRRQRLGFVDVQNCISR</sequence>
<dbReference type="EMBL" id="D26351">
    <property type="protein sequence ID" value="BAA05385.1"/>
    <property type="molecule type" value="mRNA"/>
</dbReference>
<dbReference type="EMBL" id="U01062">
    <property type="protein sequence ID" value="AAC50064.1"/>
    <property type="molecule type" value="mRNA"/>
</dbReference>
<dbReference type="EMBL" id="AL139044">
    <property type="status" value="NOT_ANNOTATED_CDS"/>
    <property type="molecule type" value="Genomic_DNA"/>
</dbReference>
<dbReference type="EMBL" id="CH471081">
    <property type="protein sequence ID" value="EAX03744.1"/>
    <property type="molecule type" value="Genomic_DNA"/>
</dbReference>
<dbReference type="CCDS" id="CCDS4783.1"/>
<dbReference type="PIR" id="A49873">
    <property type="entry name" value="A49873"/>
</dbReference>
<dbReference type="RefSeq" id="NP_002215.2">
    <property type="nucleotide sequence ID" value="NM_002224.4"/>
</dbReference>
<dbReference type="RefSeq" id="XP_047274687.1">
    <property type="nucleotide sequence ID" value="XM_047418731.1"/>
</dbReference>
<dbReference type="PDB" id="6DQJ">
    <property type="method" value="EM"/>
    <property type="resolution" value="3.49 A"/>
    <property type="chains" value="A/B/C/D=1-2671"/>
</dbReference>
<dbReference type="PDB" id="6DQN">
    <property type="method" value="EM"/>
    <property type="resolution" value="3.33 A"/>
    <property type="chains" value="A/B/C/D=1-2671"/>
</dbReference>
<dbReference type="PDB" id="6DQS">
    <property type="method" value="EM"/>
    <property type="resolution" value="4.12 A"/>
    <property type="chains" value="A/B/C/D=1-2671"/>
</dbReference>
<dbReference type="PDB" id="6DQV">
    <property type="method" value="EM"/>
    <property type="resolution" value="3.82 A"/>
    <property type="chains" value="A/B/C/D=1-2671"/>
</dbReference>
<dbReference type="PDB" id="6DQZ">
    <property type="method" value="EM"/>
    <property type="resolution" value="6.01 A"/>
    <property type="chains" value="A/B/C/D=1-2671"/>
</dbReference>
<dbReference type="PDB" id="6DR0">
    <property type="method" value="EM"/>
    <property type="resolution" value="4.47 A"/>
    <property type="chains" value="A/B/C/D=1-2671"/>
</dbReference>
<dbReference type="PDB" id="6DR2">
    <property type="method" value="EM"/>
    <property type="resolution" value="4.33 A"/>
    <property type="chains" value="A/B/C/D=1-2671"/>
</dbReference>
<dbReference type="PDB" id="6DRA">
    <property type="method" value="EM"/>
    <property type="resolution" value="3.96 A"/>
    <property type="chains" value="A/B/C/D=1-2671"/>
</dbReference>
<dbReference type="PDB" id="6DRC">
    <property type="method" value="EM"/>
    <property type="resolution" value="3.92 A"/>
    <property type="chains" value="A/B/C/D=1-2671"/>
</dbReference>
<dbReference type="PDB" id="6UQK">
    <property type="method" value="EM"/>
    <property type="resolution" value="3.77 A"/>
    <property type="chains" value="A/B/C/D=4-2611"/>
</dbReference>
<dbReference type="PDB" id="7T3P">
    <property type="method" value="EM"/>
    <property type="resolution" value="3.20 A"/>
    <property type="chains" value="A/B/C/D=1-2611"/>
</dbReference>
<dbReference type="PDB" id="7T3Q">
    <property type="method" value="EM"/>
    <property type="resolution" value="3.30 A"/>
    <property type="chains" value="A/B/C/D=1-2611"/>
</dbReference>
<dbReference type="PDB" id="7T3R">
    <property type="method" value="EM"/>
    <property type="resolution" value="3.40 A"/>
    <property type="chains" value="A/B/C/D=1-2611"/>
</dbReference>
<dbReference type="PDB" id="7T3T">
    <property type="method" value="EM"/>
    <property type="resolution" value="3.80 A"/>
    <property type="chains" value="A/B/C/D=1-2611"/>
</dbReference>
<dbReference type="PDB" id="7T3U">
    <property type="method" value="EM"/>
    <property type="resolution" value="3.70 A"/>
    <property type="chains" value="A/B/C/D=1-2611"/>
</dbReference>
<dbReference type="PDB" id="8TK8">
    <property type="method" value="EM"/>
    <property type="resolution" value="2.70 A"/>
    <property type="chains" value="A/B/C/D=1-2671"/>
</dbReference>
<dbReference type="PDB" id="8TKD">
    <property type="method" value="EM"/>
    <property type="resolution" value="3.70 A"/>
    <property type="chains" value="A/B/C/D=1-2671"/>
</dbReference>
<dbReference type="PDB" id="8TKE">
    <property type="method" value="EM"/>
    <property type="resolution" value="3.60 A"/>
    <property type="chains" value="A/B/C/D=1-2671"/>
</dbReference>
<dbReference type="PDB" id="8TKF">
    <property type="method" value="EM"/>
    <property type="resolution" value="3.20 A"/>
    <property type="chains" value="A/B/C/D=1-2671"/>
</dbReference>
<dbReference type="PDB" id="8TKG">
    <property type="method" value="EM"/>
    <property type="resolution" value="2.50 A"/>
    <property type="chains" value="A/B/C/D=1-2671"/>
</dbReference>
<dbReference type="PDB" id="8TKH">
    <property type="method" value="EM"/>
    <property type="resolution" value="3.50 A"/>
    <property type="chains" value="A/B/C/D=1-2671"/>
</dbReference>
<dbReference type="PDB" id="8TKI">
    <property type="method" value="EM"/>
    <property type="resolution" value="3.60 A"/>
    <property type="chains" value="A/B/C/D=1-2671"/>
</dbReference>
<dbReference type="PDB" id="8TL9">
    <property type="method" value="EM"/>
    <property type="resolution" value="3.30 A"/>
    <property type="chains" value="A/B/C/D=1-2671"/>
</dbReference>
<dbReference type="PDB" id="8TLA">
    <property type="method" value="EM"/>
    <property type="resolution" value="3.20 A"/>
    <property type="chains" value="A/B/C/D=1-2671"/>
</dbReference>
<dbReference type="PDBsum" id="6DQJ"/>
<dbReference type="PDBsum" id="6DQN"/>
<dbReference type="PDBsum" id="6DQS"/>
<dbReference type="PDBsum" id="6DQV"/>
<dbReference type="PDBsum" id="6DQZ"/>
<dbReference type="PDBsum" id="6DR0"/>
<dbReference type="PDBsum" id="6DR2"/>
<dbReference type="PDBsum" id="6DRA"/>
<dbReference type="PDBsum" id="6DRC"/>
<dbReference type="PDBsum" id="6UQK"/>
<dbReference type="PDBsum" id="7T3P"/>
<dbReference type="PDBsum" id="7T3Q"/>
<dbReference type="PDBsum" id="7T3R"/>
<dbReference type="PDBsum" id="7T3T"/>
<dbReference type="PDBsum" id="7T3U"/>
<dbReference type="PDBsum" id="8TK8"/>
<dbReference type="PDBsum" id="8TKD"/>
<dbReference type="PDBsum" id="8TKE"/>
<dbReference type="PDBsum" id="8TKF"/>
<dbReference type="PDBsum" id="8TKG"/>
<dbReference type="PDBsum" id="8TKH"/>
<dbReference type="PDBsum" id="8TKI"/>
<dbReference type="PDBsum" id="8TL9"/>
<dbReference type="PDBsum" id="8TLA"/>
<dbReference type="EMDB" id="EMD-20849"/>
<dbReference type="EMDB" id="EMD-25667"/>
<dbReference type="EMDB" id="EMD-25668"/>
<dbReference type="EMDB" id="EMD-25669"/>
<dbReference type="EMDB" id="EMD-25670"/>
<dbReference type="EMDB" id="EMD-25671"/>
<dbReference type="EMDB" id="EMD-41323"/>
<dbReference type="EMDB" id="EMD-41324"/>
<dbReference type="EMDB" id="EMD-41325"/>
<dbReference type="EMDB" id="EMD-41326"/>
<dbReference type="EMDB" id="EMD-41327"/>
<dbReference type="EMDB" id="EMD-41328"/>
<dbReference type="EMDB" id="EMD-41329"/>
<dbReference type="EMDB" id="EMD-41330"/>
<dbReference type="EMDB" id="EMD-41331"/>
<dbReference type="EMDB" id="EMD-41332"/>
<dbReference type="EMDB" id="EMD-41333"/>
<dbReference type="EMDB" id="EMD-41334"/>
<dbReference type="EMDB" id="EMD-41335"/>
<dbReference type="EMDB" id="EMD-41336"/>
<dbReference type="EMDB" id="EMD-41337"/>
<dbReference type="EMDB" id="EMD-41338"/>
<dbReference type="EMDB" id="EMD-41339"/>
<dbReference type="EMDB" id="EMD-41340"/>
<dbReference type="EMDB" id="EMD-41341"/>
<dbReference type="EMDB" id="EMD-41342"/>
<dbReference type="EMDB" id="EMD-41343"/>
<dbReference type="EMDB" id="EMD-41344"/>
<dbReference type="EMDB" id="EMD-41345"/>
<dbReference type="EMDB" id="EMD-41347"/>
<dbReference type="EMDB" id="EMD-41348"/>
<dbReference type="EMDB" id="EMD-41349"/>
<dbReference type="EMDB" id="EMD-41350"/>
<dbReference type="EMDB" id="EMD-41351"/>
<dbReference type="EMDB" id="EMD-41352"/>
<dbReference type="EMDB" id="EMD-41365"/>
<dbReference type="EMDB" id="EMD-41366"/>
<dbReference type="EMDB" id="EMD-7978"/>
<dbReference type="EMDB" id="EMD-7981"/>
<dbReference type="EMDB" id="EMD-7983"/>
<dbReference type="EMDB" id="EMD-7984"/>
<dbReference type="EMDB" id="EMD-7986"/>
<dbReference type="EMDB" id="EMD-7987"/>
<dbReference type="EMDB" id="EMD-7988"/>
<dbReference type="EMDB" id="EMD-7991"/>
<dbReference type="EMDB" id="EMD-7994"/>
<dbReference type="SMR" id="Q14573"/>
<dbReference type="BioGRID" id="109915">
    <property type="interactions" value="241"/>
</dbReference>
<dbReference type="CORUM" id="Q14573"/>
<dbReference type="FunCoup" id="Q14573">
    <property type="interactions" value="1899"/>
</dbReference>
<dbReference type="IntAct" id="Q14573">
    <property type="interactions" value="98"/>
</dbReference>
<dbReference type="MINT" id="Q14573"/>
<dbReference type="STRING" id="9606.ENSP00000363435"/>
<dbReference type="BindingDB" id="Q14573"/>
<dbReference type="ChEMBL" id="CHEMBL3904"/>
<dbReference type="DrugBank" id="DB03401">
    <property type="generic name" value="1D-myo-inositol 1,4,5-trisphosphate"/>
</dbReference>
<dbReference type="DrugBank" id="DB00201">
    <property type="generic name" value="Caffeine"/>
</dbReference>
<dbReference type="GlyGen" id="Q14573">
    <property type="glycosylation" value="5 sites, 1 N-linked glycan (1 site), 1 O-linked glycan (2 sites)"/>
</dbReference>
<dbReference type="iPTMnet" id="Q14573"/>
<dbReference type="PhosphoSitePlus" id="Q14573"/>
<dbReference type="SwissPalm" id="Q14573"/>
<dbReference type="BioMuta" id="ITPR3"/>
<dbReference type="DMDM" id="209572633"/>
<dbReference type="jPOST" id="Q14573"/>
<dbReference type="MassIVE" id="Q14573"/>
<dbReference type="PaxDb" id="9606-ENSP00000363435"/>
<dbReference type="PeptideAtlas" id="Q14573"/>
<dbReference type="ProteomicsDB" id="60051"/>
<dbReference type="Pumba" id="Q14573"/>
<dbReference type="Antibodypedia" id="1294">
    <property type="antibodies" value="158 antibodies from 27 providers"/>
</dbReference>
<dbReference type="DNASU" id="3710"/>
<dbReference type="Ensembl" id="ENST00000374316.9">
    <property type="protein sequence ID" value="ENSP00000363435.4"/>
    <property type="gene ID" value="ENSG00000096433.11"/>
</dbReference>
<dbReference type="Ensembl" id="ENST00000605930.3">
    <property type="protein sequence ID" value="ENSP00000475177.1"/>
    <property type="gene ID" value="ENSG00000096433.11"/>
</dbReference>
<dbReference type="GeneID" id="3710"/>
<dbReference type="KEGG" id="hsa:3710"/>
<dbReference type="MANE-Select" id="ENST00000605930.3">
    <property type="protein sequence ID" value="ENSP00000475177.1"/>
    <property type="RefSeq nucleotide sequence ID" value="NM_002224.4"/>
    <property type="RefSeq protein sequence ID" value="NP_002215.2"/>
</dbReference>
<dbReference type="UCSC" id="uc063nyh.1">
    <property type="organism name" value="human"/>
</dbReference>
<dbReference type="AGR" id="HGNC:6182"/>
<dbReference type="CTD" id="3710"/>
<dbReference type="DisGeNET" id="3710"/>
<dbReference type="GeneCards" id="ITPR3"/>
<dbReference type="HGNC" id="HGNC:6182">
    <property type="gene designation" value="ITPR3"/>
</dbReference>
<dbReference type="HPA" id="ENSG00000096433">
    <property type="expression patterns" value="Low tissue specificity"/>
</dbReference>
<dbReference type="MalaCards" id="ITPR3"/>
<dbReference type="MIM" id="147267">
    <property type="type" value="gene"/>
</dbReference>
<dbReference type="MIM" id="620111">
    <property type="type" value="phenotype"/>
</dbReference>
<dbReference type="neXtProt" id="NX_Q14573"/>
<dbReference type="OpenTargets" id="ENSG00000096433"/>
<dbReference type="PharmGKB" id="PA29980"/>
<dbReference type="VEuPathDB" id="HostDB:ENSG00000096433"/>
<dbReference type="eggNOG" id="KOG3533">
    <property type="taxonomic scope" value="Eukaryota"/>
</dbReference>
<dbReference type="GeneTree" id="ENSGT00940000157078"/>
<dbReference type="HOGENOM" id="CLU_000206_1_0_1"/>
<dbReference type="InParanoid" id="Q14573"/>
<dbReference type="OMA" id="WLMWTDK"/>
<dbReference type="OrthoDB" id="76898at2759"/>
<dbReference type="PAN-GO" id="Q14573">
    <property type="GO annotations" value="9 GO annotations based on evolutionary models"/>
</dbReference>
<dbReference type="PhylomeDB" id="Q14573"/>
<dbReference type="TreeFam" id="TF312815"/>
<dbReference type="PathwayCommons" id="Q14573"/>
<dbReference type="Reactome" id="R-HSA-112043">
    <property type="pathway name" value="PLC beta mediated events"/>
</dbReference>
<dbReference type="Reactome" id="R-HSA-114508">
    <property type="pathway name" value="Effects of PIP2 hydrolysis"/>
</dbReference>
<dbReference type="Reactome" id="R-HSA-139853">
    <property type="pathway name" value="Elevation of cytosolic Ca2+ levels"/>
</dbReference>
<dbReference type="Reactome" id="R-HSA-1489509">
    <property type="pathway name" value="DAG and IP3 signaling"/>
</dbReference>
<dbReference type="Reactome" id="R-HSA-2029485">
    <property type="pathway name" value="Role of phospholipids in phagocytosis"/>
</dbReference>
<dbReference type="Reactome" id="R-HSA-2871809">
    <property type="pathway name" value="FCERI mediated Ca+2 mobilization"/>
</dbReference>
<dbReference type="Reactome" id="R-HSA-381676">
    <property type="pathway name" value="Glucagon-like Peptide-1 (GLP1) regulates insulin secretion"/>
</dbReference>
<dbReference type="Reactome" id="R-HSA-4086398">
    <property type="pathway name" value="Ca2+ pathway"/>
</dbReference>
<dbReference type="Reactome" id="R-HSA-422356">
    <property type="pathway name" value="Regulation of insulin secretion"/>
</dbReference>
<dbReference type="Reactome" id="R-HSA-5218921">
    <property type="pathway name" value="VEGFR2 mediated cell proliferation"/>
</dbReference>
<dbReference type="Reactome" id="R-HSA-5578775">
    <property type="pathway name" value="Ion homeostasis"/>
</dbReference>
<dbReference type="Reactome" id="R-HSA-5607763">
    <property type="pathway name" value="CLEC7A (Dectin-1) induces NFAT activation"/>
</dbReference>
<dbReference type="Reactome" id="R-HSA-9664323">
    <property type="pathway name" value="FCGR3A-mediated IL10 synthesis"/>
</dbReference>
<dbReference type="Reactome" id="R-HSA-9717207">
    <property type="pathway name" value="Sensory perception of sweet, bitter, and umami (glutamate) taste"/>
</dbReference>
<dbReference type="Reactome" id="R-HSA-983695">
    <property type="pathway name" value="Antigen activates B Cell Receptor (BCR) leading to generation of second messengers"/>
</dbReference>
<dbReference type="SignaLink" id="Q14573"/>
<dbReference type="BioGRID-ORCS" id="3710">
    <property type="hits" value="8 hits in 1163 CRISPR screens"/>
</dbReference>
<dbReference type="ChiTaRS" id="ITPR3">
    <property type="organism name" value="human"/>
</dbReference>
<dbReference type="GeneWiki" id="ITPR3"/>
<dbReference type="GenomeRNAi" id="3710"/>
<dbReference type="Pharos" id="Q14573">
    <property type="development level" value="Tchem"/>
</dbReference>
<dbReference type="PRO" id="PR:Q14573"/>
<dbReference type="Proteomes" id="UP000005640">
    <property type="component" value="Chromosome 6"/>
</dbReference>
<dbReference type="RNAct" id="Q14573">
    <property type="molecule type" value="protein"/>
</dbReference>
<dbReference type="Bgee" id="ENSG00000096433">
    <property type="expression patterns" value="Expressed in cartilage tissue and 184 other cell types or tissues"/>
</dbReference>
<dbReference type="GO" id="GO:0045177">
    <property type="term" value="C:apical part of cell"/>
    <property type="evidence" value="ECO:0000250"/>
    <property type="project" value="BHF-UCL"/>
</dbReference>
<dbReference type="GO" id="GO:0005903">
    <property type="term" value="C:brush border"/>
    <property type="evidence" value="ECO:0000250"/>
    <property type="project" value="BHF-UCL"/>
</dbReference>
<dbReference type="GO" id="GO:0005737">
    <property type="term" value="C:cytoplasm"/>
    <property type="evidence" value="ECO:0000250"/>
    <property type="project" value="BHF-UCL"/>
</dbReference>
<dbReference type="GO" id="GO:0098554">
    <property type="term" value="C:cytoplasmic side of endoplasmic reticulum membrane"/>
    <property type="evidence" value="ECO:0000250"/>
    <property type="project" value="UniProtKB"/>
</dbReference>
<dbReference type="GO" id="GO:0005783">
    <property type="term" value="C:endoplasmic reticulum"/>
    <property type="evidence" value="ECO:0000250"/>
    <property type="project" value="BHF-UCL"/>
</dbReference>
<dbReference type="GO" id="GO:0005789">
    <property type="term" value="C:endoplasmic reticulum membrane"/>
    <property type="evidence" value="ECO:0000314"/>
    <property type="project" value="UniProtKB"/>
</dbReference>
<dbReference type="GO" id="GO:0016020">
    <property type="term" value="C:membrane"/>
    <property type="evidence" value="ECO:0007005"/>
    <property type="project" value="UniProtKB"/>
</dbReference>
<dbReference type="GO" id="GO:0043025">
    <property type="term" value="C:neuronal cell body"/>
    <property type="evidence" value="ECO:0000250"/>
    <property type="project" value="BHF-UCL"/>
</dbReference>
<dbReference type="GO" id="GO:0005640">
    <property type="term" value="C:nuclear outer membrane"/>
    <property type="evidence" value="ECO:0000250"/>
    <property type="project" value="BHF-UCL"/>
</dbReference>
<dbReference type="GO" id="GO:0005730">
    <property type="term" value="C:nucleolus"/>
    <property type="evidence" value="ECO:0007669"/>
    <property type="project" value="Ensembl"/>
</dbReference>
<dbReference type="GO" id="GO:0005654">
    <property type="term" value="C:nucleoplasm"/>
    <property type="evidence" value="ECO:0007669"/>
    <property type="project" value="Ensembl"/>
</dbReference>
<dbReference type="GO" id="GO:0005886">
    <property type="term" value="C:plasma membrane"/>
    <property type="evidence" value="ECO:0000314"/>
    <property type="project" value="UniProtKB"/>
</dbReference>
<dbReference type="GO" id="GO:0031095">
    <property type="term" value="C:platelet dense tubular network membrane"/>
    <property type="evidence" value="ECO:0000304"/>
    <property type="project" value="Reactome"/>
</dbReference>
<dbReference type="GO" id="GO:0043235">
    <property type="term" value="C:receptor complex"/>
    <property type="evidence" value="ECO:0000314"/>
    <property type="project" value="MGI"/>
</dbReference>
<dbReference type="GO" id="GO:0016529">
    <property type="term" value="C:sarcoplasmic reticulum"/>
    <property type="evidence" value="ECO:0000318"/>
    <property type="project" value="GO_Central"/>
</dbReference>
<dbReference type="GO" id="GO:0030667">
    <property type="term" value="C:secretory granule membrane"/>
    <property type="evidence" value="ECO:0000318"/>
    <property type="project" value="GO_Central"/>
</dbReference>
<dbReference type="GO" id="GO:0030658">
    <property type="term" value="C:transport vesicle membrane"/>
    <property type="evidence" value="ECO:0007669"/>
    <property type="project" value="UniProtKB-SubCell"/>
</dbReference>
<dbReference type="GO" id="GO:0005524">
    <property type="term" value="F:ATP binding"/>
    <property type="evidence" value="ECO:0000314"/>
    <property type="project" value="UniProtKB"/>
</dbReference>
<dbReference type="GO" id="GO:0005509">
    <property type="term" value="F:calcium ion binding"/>
    <property type="evidence" value="ECO:0000314"/>
    <property type="project" value="UniProtKB"/>
</dbReference>
<dbReference type="GO" id="GO:0043533">
    <property type="term" value="F:inositol 1,3,4,5 tetrakisphosphate binding"/>
    <property type="evidence" value="ECO:0000250"/>
    <property type="project" value="BHF-UCL"/>
</dbReference>
<dbReference type="GO" id="GO:0070679">
    <property type="term" value="F:inositol 1,4,5 trisphosphate binding"/>
    <property type="evidence" value="ECO:0000314"/>
    <property type="project" value="BHF-UCL"/>
</dbReference>
<dbReference type="GO" id="GO:0005220">
    <property type="term" value="F:inositol 1,4,5-trisphosphate-gated calcium channel activity"/>
    <property type="evidence" value="ECO:0000314"/>
    <property type="project" value="UniProtKB"/>
</dbReference>
<dbReference type="GO" id="GO:0000822">
    <property type="term" value="F:inositol hexakisphosphate binding"/>
    <property type="evidence" value="ECO:0000250"/>
    <property type="project" value="BHF-UCL"/>
</dbReference>
<dbReference type="GO" id="GO:0015278">
    <property type="term" value="F:intracellularly gated calcium channel activity"/>
    <property type="evidence" value="ECO:0000250"/>
    <property type="project" value="UniProtKB"/>
</dbReference>
<dbReference type="GO" id="GO:0035091">
    <property type="term" value="F:phosphatidylinositol binding"/>
    <property type="evidence" value="ECO:0000318"/>
    <property type="project" value="GO_Central"/>
</dbReference>
<dbReference type="GO" id="GO:0008270">
    <property type="term" value="F:zinc ion binding"/>
    <property type="evidence" value="ECO:0000314"/>
    <property type="project" value="UniProtKB"/>
</dbReference>
<dbReference type="GO" id="GO:0055074">
    <property type="term" value="P:calcium ion homeostasis"/>
    <property type="evidence" value="ECO:0000315"/>
    <property type="project" value="UniProtKB"/>
</dbReference>
<dbReference type="GO" id="GO:0007186">
    <property type="term" value="P:G protein-coupled receptor signaling pathway"/>
    <property type="evidence" value="ECO:0000250"/>
    <property type="project" value="BHF-UCL"/>
</dbReference>
<dbReference type="GO" id="GO:0060291">
    <property type="term" value="P:long-term synaptic potentiation"/>
    <property type="evidence" value="ECO:0007669"/>
    <property type="project" value="Ensembl"/>
</dbReference>
<dbReference type="GO" id="GO:0007613">
    <property type="term" value="P:memory"/>
    <property type="evidence" value="ECO:0007669"/>
    <property type="project" value="Ensembl"/>
</dbReference>
<dbReference type="GO" id="GO:0030168">
    <property type="term" value="P:platelet activation"/>
    <property type="evidence" value="ECO:0000314"/>
    <property type="project" value="BHF-UCL"/>
</dbReference>
<dbReference type="GO" id="GO:0007204">
    <property type="term" value="P:positive regulation of cytosolic calcium ion concentration"/>
    <property type="evidence" value="ECO:0000250"/>
    <property type="project" value="BHF-UCL"/>
</dbReference>
<dbReference type="GO" id="GO:0051289">
    <property type="term" value="P:protein homotetramerization"/>
    <property type="evidence" value="ECO:0000314"/>
    <property type="project" value="UniProtKB"/>
</dbReference>
<dbReference type="GO" id="GO:0051209">
    <property type="term" value="P:release of sequestered calcium ion into cytosol"/>
    <property type="evidence" value="ECO:0000314"/>
    <property type="project" value="UniProt"/>
</dbReference>
<dbReference type="GO" id="GO:0051592">
    <property type="term" value="P:response to calcium ion"/>
    <property type="evidence" value="ECO:0000314"/>
    <property type="project" value="BHF-UCL"/>
</dbReference>
<dbReference type="GO" id="GO:0050913">
    <property type="term" value="P:sensory perception of bitter taste"/>
    <property type="evidence" value="ECO:0007669"/>
    <property type="project" value="Ensembl"/>
</dbReference>
<dbReference type="GO" id="GO:0050916">
    <property type="term" value="P:sensory perception of sweet taste"/>
    <property type="evidence" value="ECO:0007669"/>
    <property type="project" value="Ensembl"/>
</dbReference>
<dbReference type="GO" id="GO:0050909">
    <property type="term" value="P:sensory perception of taste"/>
    <property type="evidence" value="ECO:0000304"/>
    <property type="project" value="Reactome"/>
</dbReference>
<dbReference type="GO" id="GO:0050917">
    <property type="term" value="P:sensory perception of umami taste"/>
    <property type="evidence" value="ECO:0007669"/>
    <property type="project" value="Ensembl"/>
</dbReference>
<dbReference type="CDD" id="cd23289">
    <property type="entry name" value="beta-trefoil_MIR_ITPR3"/>
    <property type="match status" value="1"/>
</dbReference>
<dbReference type="FunFam" id="2.80.10.50:FF:000002">
    <property type="entry name" value="Inositol 1,4,5-trisphosphate receptor type 2"/>
    <property type="match status" value="1"/>
</dbReference>
<dbReference type="FunFam" id="2.80.10.50:FF:000028">
    <property type="entry name" value="Inositol 1,4,5-trisphosphate receptor type 3"/>
    <property type="match status" value="1"/>
</dbReference>
<dbReference type="FunFam" id="1.25.10.30:FF:000001">
    <property type="entry name" value="Inositol 1,4,5-trisphosphate receptor, type 2"/>
    <property type="match status" value="1"/>
</dbReference>
<dbReference type="Gene3D" id="1.10.287.70">
    <property type="match status" value="1"/>
</dbReference>
<dbReference type="Gene3D" id="2.80.10.50">
    <property type="match status" value="2"/>
</dbReference>
<dbReference type="Gene3D" id="1.25.10.30">
    <property type="entry name" value="IP3 receptor type 1 binding core, RIH domain"/>
    <property type="match status" value="1"/>
</dbReference>
<dbReference type="InterPro" id="IPR014821">
    <property type="entry name" value="Ins145_P3_rcpt"/>
</dbReference>
<dbReference type="InterPro" id="IPR000493">
    <property type="entry name" value="InsP3_rcpt"/>
</dbReference>
<dbReference type="InterPro" id="IPR005821">
    <property type="entry name" value="Ion_trans_dom"/>
</dbReference>
<dbReference type="InterPro" id="IPR036300">
    <property type="entry name" value="MIR_dom_sf"/>
</dbReference>
<dbReference type="InterPro" id="IPR016093">
    <property type="entry name" value="MIR_motif"/>
</dbReference>
<dbReference type="InterPro" id="IPR013662">
    <property type="entry name" value="RIH_assoc-dom"/>
</dbReference>
<dbReference type="InterPro" id="IPR000699">
    <property type="entry name" value="RIH_dom"/>
</dbReference>
<dbReference type="InterPro" id="IPR015925">
    <property type="entry name" value="Ryanodine_IP3_receptor"/>
</dbReference>
<dbReference type="InterPro" id="IPR035910">
    <property type="entry name" value="RyR/IP3R_RIH_dom_sf"/>
</dbReference>
<dbReference type="PANTHER" id="PTHR45816:SF1">
    <property type="entry name" value="INOSITOL 1,4,5-TRISPHOSPHATE RECEPTOR"/>
    <property type="match status" value="1"/>
</dbReference>
<dbReference type="PANTHER" id="PTHR45816">
    <property type="entry name" value="MIR DOMAIN-CONTAINING PROTEIN"/>
    <property type="match status" value="1"/>
</dbReference>
<dbReference type="Pfam" id="PF08709">
    <property type="entry name" value="Ins145_P3_rec"/>
    <property type="match status" value="1"/>
</dbReference>
<dbReference type="Pfam" id="PF00520">
    <property type="entry name" value="Ion_trans"/>
    <property type="match status" value="1"/>
</dbReference>
<dbReference type="Pfam" id="PF02815">
    <property type="entry name" value="MIR"/>
    <property type="match status" value="1"/>
</dbReference>
<dbReference type="Pfam" id="PF08454">
    <property type="entry name" value="RIH_assoc"/>
    <property type="match status" value="1"/>
</dbReference>
<dbReference type="Pfam" id="PF01365">
    <property type="entry name" value="RYDR_ITPR"/>
    <property type="match status" value="2"/>
</dbReference>
<dbReference type="PRINTS" id="PR00779">
    <property type="entry name" value="INSP3RECEPTR"/>
</dbReference>
<dbReference type="SMART" id="SM00472">
    <property type="entry name" value="MIR"/>
    <property type="match status" value="4"/>
</dbReference>
<dbReference type="SUPFAM" id="SSF100909">
    <property type="entry name" value="IP3 receptor type 1 binding core, domain 2"/>
    <property type="match status" value="2"/>
</dbReference>
<dbReference type="SUPFAM" id="SSF82109">
    <property type="entry name" value="MIR domain"/>
    <property type="match status" value="2"/>
</dbReference>
<dbReference type="PROSITE" id="PS50919">
    <property type="entry name" value="MIR"/>
    <property type="match status" value="5"/>
</dbReference>
<evidence type="ECO:0000250" key="1">
    <source>
        <dbReference type="UniProtKB" id="P70227"/>
    </source>
</evidence>
<evidence type="ECO:0000250" key="2">
    <source>
        <dbReference type="UniProtKB" id="Q63269"/>
    </source>
</evidence>
<evidence type="ECO:0000250" key="3">
    <source>
        <dbReference type="UniProtKB" id="Q8WN95"/>
    </source>
</evidence>
<evidence type="ECO:0000255" key="4"/>
<evidence type="ECO:0000255" key="5">
    <source>
        <dbReference type="PROSITE-ProRule" id="PRU00131"/>
    </source>
</evidence>
<evidence type="ECO:0000256" key="6">
    <source>
        <dbReference type="SAM" id="MobiDB-lite"/>
    </source>
</evidence>
<evidence type="ECO:0000269" key="7">
    <source>
    </source>
</evidence>
<evidence type="ECO:0000269" key="8">
    <source>
    </source>
</evidence>
<evidence type="ECO:0000269" key="9">
    <source>
    </source>
</evidence>
<evidence type="ECO:0000269" key="10">
    <source>
    </source>
</evidence>
<evidence type="ECO:0000269" key="11">
    <source>
    </source>
</evidence>
<evidence type="ECO:0000269" key="12">
    <source>
    </source>
</evidence>
<evidence type="ECO:0000269" key="13">
    <source>
    </source>
</evidence>
<evidence type="ECO:0000269" key="14">
    <source>
    </source>
</evidence>
<evidence type="ECO:0000269" key="15">
    <source>
    </source>
</evidence>
<evidence type="ECO:0000269" key="16">
    <source>
    </source>
</evidence>
<evidence type="ECO:0000269" key="17">
    <source>
    </source>
</evidence>
<evidence type="ECO:0000269" key="18">
    <source>
    </source>
</evidence>
<evidence type="ECO:0000269" key="19">
    <source>
    </source>
</evidence>
<evidence type="ECO:0000303" key="20">
    <source>
    </source>
</evidence>
<evidence type="ECO:0000303" key="21">
    <source>
    </source>
</evidence>
<evidence type="ECO:0000305" key="22"/>
<evidence type="ECO:0000305" key="23">
    <source>
    </source>
</evidence>
<evidence type="ECO:0000312" key="24">
    <source>
        <dbReference type="HGNC" id="HGNC:6182"/>
    </source>
</evidence>
<evidence type="ECO:0000312" key="25">
    <source>
        <dbReference type="PDB" id="8TKG"/>
    </source>
</evidence>
<evidence type="ECO:0007744" key="26">
    <source>
        <dbReference type="PDB" id="6DQJ"/>
    </source>
</evidence>
<evidence type="ECO:0007744" key="27">
    <source>
        <dbReference type="PDB" id="6DQN"/>
    </source>
</evidence>
<evidence type="ECO:0007744" key="28">
    <source>
        <dbReference type="PDB" id="6DQS"/>
    </source>
</evidence>
<evidence type="ECO:0007744" key="29">
    <source>
        <dbReference type="PDB" id="6DQV"/>
    </source>
</evidence>
<evidence type="ECO:0007744" key="30">
    <source>
        <dbReference type="PDB" id="6DQZ"/>
    </source>
</evidence>
<evidence type="ECO:0007744" key="31">
    <source>
        <dbReference type="PDB" id="6DR0"/>
    </source>
</evidence>
<evidence type="ECO:0007744" key="32">
    <source>
        <dbReference type="PDB" id="6DR2"/>
    </source>
</evidence>
<evidence type="ECO:0007744" key="33">
    <source>
        <dbReference type="PDB" id="6DRA"/>
    </source>
</evidence>
<evidence type="ECO:0007744" key="34">
    <source>
        <dbReference type="PDB" id="6DRC"/>
    </source>
</evidence>
<evidence type="ECO:0007744" key="35">
    <source>
        <dbReference type="PDB" id="7T3P"/>
    </source>
</evidence>
<evidence type="ECO:0007744" key="36">
    <source>
        <dbReference type="PDB" id="7T3Q"/>
    </source>
</evidence>
<evidence type="ECO:0007744" key="37">
    <source>
        <dbReference type="PDB" id="7T3R"/>
    </source>
</evidence>
<evidence type="ECO:0007744" key="38">
    <source>
        <dbReference type="PDB" id="7T3T"/>
    </source>
</evidence>
<evidence type="ECO:0007744" key="39">
    <source>
        <dbReference type="PDB" id="7T3U"/>
    </source>
</evidence>
<evidence type="ECO:0007744" key="40">
    <source>
        <dbReference type="PDB" id="8TK8"/>
    </source>
</evidence>
<evidence type="ECO:0007744" key="41">
    <source>
        <dbReference type="PDB" id="8TKD"/>
    </source>
</evidence>
<evidence type="ECO:0007744" key="42">
    <source>
        <dbReference type="PDB" id="8TKE"/>
    </source>
</evidence>
<evidence type="ECO:0007744" key="43">
    <source>
        <dbReference type="PDB" id="8TKF"/>
    </source>
</evidence>
<evidence type="ECO:0007744" key="44">
    <source>
        <dbReference type="PDB" id="8TKG"/>
    </source>
</evidence>
<evidence type="ECO:0007744" key="45">
    <source>
        <dbReference type="PDB" id="8TKH"/>
    </source>
</evidence>
<evidence type="ECO:0007744" key="46">
    <source>
        <dbReference type="PDB" id="8TKI"/>
    </source>
</evidence>
<evidence type="ECO:0007744" key="47">
    <source>
        <dbReference type="PDB" id="8TL9"/>
    </source>
</evidence>
<evidence type="ECO:0007744" key="48">
    <source>
        <dbReference type="PDB" id="8TLA"/>
    </source>
</evidence>
<evidence type="ECO:0007744" key="49">
    <source>
    </source>
</evidence>
<evidence type="ECO:0007744" key="50">
    <source>
    </source>
</evidence>
<evidence type="ECO:0007744" key="51">
    <source>
    </source>
</evidence>
<evidence type="ECO:0007744" key="52">
    <source>
    </source>
</evidence>
<evidence type="ECO:0007744" key="53">
    <source>
    </source>
</evidence>